<name>BIOC_BUCBP</name>
<keyword id="KW-0093">Biotin biosynthesis</keyword>
<keyword id="KW-0489">Methyltransferase</keyword>
<keyword id="KW-1185">Reference proteome</keyword>
<keyword id="KW-0949">S-adenosyl-L-methionine</keyword>
<keyword id="KW-0808">Transferase</keyword>
<gene>
    <name evidence="1" type="primary">bioC</name>
    <name type="ordered locus">bbp_270</name>
</gene>
<comment type="function">
    <text evidence="1">Converts the free carboxyl group of a malonyl-thioester to its methyl ester by transfer of a methyl group from S-adenosyl-L-methionine (SAM). It allows to synthesize pimeloyl-ACP via the fatty acid synthetic pathway.</text>
</comment>
<comment type="catalytic activity">
    <reaction evidence="1">
        <text>malonyl-[ACP] + S-adenosyl-L-methionine = malonyl-[ACP] methyl ester + S-adenosyl-L-homocysteine</text>
        <dbReference type="Rhea" id="RHEA:17105"/>
        <dbReference type="Rhea" id="RHEA-COMP:9623"/>
        <dbReference type="Rhea" id="RHEA-COMP:9954"/>
        <dbReference type="ChEBI" id="CHEBI:57856"/>
        <dbReference type="ChEBI" id="CHEBI:59789"/>
        <dbReference type="ChEBI" id="CHEBI:78449"/>
        <dbReference type="ChEBI" id="CHEBI:78845"/>
        <dbReference type="EC" id="2.1.1.197"/>
    </reaction>
</comment>
<comment type="pathway">
    <text evidence="1">Cofactor biosynthesis; biotin biosynthesis.</text>
</comment>
<comment type="similarity">
    <text evidence="1">Belongs to the methyltransferase superfamily.</text>
</comment>
<protein>
    <recommendedName>
        <fullName evidence="1">Malonyl-[acyl-carrier protein] O-methyltransferase</fullName>
        <shortName evidence="1">Malonyl-ACP O-methyltransferase</shortName>
        <ecNumber evidence="1">2.1.1.197</ecNumber>
    </recommendedName>
    <alternativeName>
        <fullName evidence="1">Biotin synthesis protein BioC</fullName>
    </alternativeName>
</protein>
<organism>
    <name type="scientific">Buchnera aphidicola subsp. Baizongia pistaciae (strain Bp)</name>
    <dbReference type="NCBI Taxonomy" id="224915"/>
    <lineage>
        <taxon>Bacteria</taxon>
        <taxon>Pseudomonadati</taxon>
        <taxon>Pseudomonadota</taxon>
        <taxon>Gammaproteobacteria</taxon>
        <taxon>Enterobacterales</taxon>
        <taxon>Erwiniaceae</taxon>
        <taxon>Buchnera</taxon>
    </lineage>
</organism>
<proteinExistence type="inferred from homology"/>
<dbReference type="EC" id="2.1.1.197" evidence="1"/>
<dbReference type="EMBL" id="AE016826">
    <property type="protein sequence ID" value="AAO26995.1"/>
    <property type="molecule type" value="Genomic_DNA"/>
</dbReference>
<dbReference type="RefSeq" id="WP_011091396.1">
    <property type="nucleotide sequence ID" value="NC_004545.1"/>
</dbReference>
<dbReference type="SMR" id="Q89AK7"/>
<dbReference type="STRING" id="224915.bbp_270"/>
<dbReference type="KEGG" id="bab:bbp_270"/>
<dbReference type="eggNOG" id="COG2226">
    <property type="taxonomic scope" value="Bacteria"/>
</dbReference>
<dbReference type="HOGENOM" id="CLU_046586_2_2_6"/>
<dbReference type="OrthoDB" id="9760689at2"/>
<dbReference type="UniPathway" id="UPA00078"/>
<dbReference type="Proteomes" id="UP000000601">
    <property type="component" value="Chromosome"/>
</dbReference>
<dbReference type="GO" id="GO:0010340">
    <property type="term" value="F:carboxyl-O-methyltransferase activity"/>
    <property type="evidence" value="ECO:0007669"/>
    <property type="project" value="UniProtKB-UniRule"/>
</dbReference>
<dbReference type="GO" id="GO:0102130">
    <property type="term" value="F:malonyl-CoA methyltransferase activity"/>
    <property type="evidence" value="ECO:0007669"/>
    <property type="project" value="UniProtKB-EC"/>
</dbReference>
<dbReference type="GO" id="GO:0008757">
    <property type="term" value="F:S-adenosylmethionine-dependent methyltransferase activity"/>
    <property type="evidence" value="ECO:0007669"/>
    <property type="project" value="InterPro"/>
</dbReference>
<dbReference type="GO" id="GO:0009102">
    <property type="term" value="P:biotin biosynthetic process"/>
    <property type="evidence" value="ECO:0007669"/>
    <property type="project" value="UniProtKB-UniRule"/>
</dbReference>
<dbReference type="GO" id="GO:0032259">
    <property type="term" value="P:methylation"/>
    <property type="evidence" value="ECO:0007669"/>
    <property type="project" value="UniProtKB-KW"/>
</dbReference>
<dbReference type="CDD" id="cd02440">
    <property type="entry name" value="AdoMet_MTases"/>
    <property type="match status" value="1"/>
</dbReference>
<dbReference type="Gene3D" id="3.40.50.150">
    <property type="entry name" value="Vaccinia Virus protein VP39"/>
    <property type="match status" value="1"/>
</dbReference>
<dbReference type="HAMAP" id="MF_00835">
    <property type="entry name" value="BioC"/>
    <property type="match status" value="1"/>
</dbReference>
<dbReference type="InterPro" id="IPR011814">
    <property type="entry name" value="BioC"/>
</dbReference>
<dbReference type="InterPro" id="IPR013216">
    <property type="entry name" value="Methyltransf_11"/>
</dbReference>
<dbReference type="InterPro" id="IPR029063">
    <property type="entry name" value="SAM-dependent_MTases_sf"/>
</dbReference>
<dbReference type="NCBIfam" id="TIGR02072">
    <property type="entry name" value="BioC"/>
    <property type="match status" value="1"/>
</dbReference>
<dbReference type="PANTHER" id="PTHR43591">
    <property type="entry name" value="METHYLTRANSFERASE"/>
    <property type="match status" value="1"/>
</dbReference>
<dbReference type="Pfam" id="PF08241">
    <property type="entry name" value="Methyltransf_11"/>
    <property type="match status" value="1"/>
</dbReference>
<dbReference type="SUPFAM" id="SSF53335">
    <property type="entry name" value="S-adenosyl-L-methionine-dependent methyltransferases"/>
    <property type="match status" value="1"/>
</dbReference>
<evidence type="ECO:0000255" key="1">
    <source>
        <dbReference type="HAMAP-Rule" id="MF_00835"/>
    </source>
</evidence>
<feature type="chain" id="PRO_0000204415" description="Malonyl-[acyl-carrier protein] O-methyltransferase">
    <location>
        <begin position="1"/>
        <end position="247"/>
    </location>
</feature>
<reference key="1">
    <citation type="journal article" date="2003" name="Proc. Natl. Acad. Sci. U.S.A.">
        <title>Reductive genome evolution in Buchnera aphidicola.</title>
        <authorList>
            <person name="van Ham R.C.H.J."/>
            <person name="Kamerbeek J."/>
            <person name="Palacios C."/>
            <person name="Rausell C."/>
            <person name="Abascal F."/>
            <person name="Bastolla U."/>
            <person name="Fernandez J.M."/>
            <person name="Jimenez L."/>
            <person name="Postigo M."/>
            <person name="Silva F.J."/>
            <person name="Tamames J."/>
            <person name="Viguera E."/>
            <person name="Latorre A."/>
            <person name="Valencia A."/>
            <person name="Moran F."/>
            <person name="Moya A."/>
        </authorList>
    </citation>
    <scope>NUCLEOTIDE SEQUENCE [LARGE SCALE GENOMIC DNA]</scope>
    <source>
        <strain>Bp</strain>
    </source>
</reference>
<sequence length="247" mass="28219">MIDKKKIAEAFGKAAANYDNFSVIQRIAGNILLSKIETFFNISILDAGCGTGWFSKKWRQLGNTVTALDFSKNMLLTAKNTNSADYYLHADMEQLPICDNIFDLSWSNLSLQWCNKFNKAISELCRVTKPGGMVVFSTIAHGSLYEFNKAYRTINSSYQENKFLSINDIKLSCCNKKTLIDNILITFSFSKILEAMYSFKKIGANYISSNHSKILTKKKIRQLQENWPYNPNGYLLSYRFVFGVIYL</sequence>
<accession>Q89AK7</accession>